<protein>
    <recommendedName>
        <fullName evidence="1">Small ribosomal subunit protein uS7</fullName>
    </recommendedName>
    <alternativeName>
        <fullName evidence="2">30S ribosomal protein S7</fullName>
    </alternativeName>
</protein>
<organism>
    <name type="scientific">Paraburkholderia phytofirmans (strain DSM 17436 / LMG 22146 / PsJN)</name>
    <name type="common">Burkholderia phytofirmans</name>
    <dbReference type="NCBI Taxonomy" id="398527"/>
    <lineage>
        <taxon>Bacteria</taxon>
        <taxon>Pseudomonadati</taxon>
        <taxon>Pseudomonadota</taxon>
        <taxon>Betaproteobacteria</taxon>
        <taxon>Burkholderiales</taxon>
        <taxon>Burkholderiaceae</taxon>
        <taxon>Paraburkholderia</taxon>
    </lineage>
</organism>
<keyword id="KW-0687">Ribonucleoprotein</keyword>
<keyword id="KW-0689">Ribosomal protein</keyword>
<keyword id="KW-0694">RNA-binding</keyword>
<keyword id="KW-0699">rRNA-binding</keyword>
<keyword id="KW-0820">tRNA-binding</keyword>
<accession>B2T755</accession>
<evidence type="ECO:0000255" key="1">
    <source>
        <dbReference type="HAMAP-Rule" id="MF_00480"/>
    </source>
</evidence>
<evidence type="ECO:0000305" key="2"/>
<reference key="1">
    <citation type="journal article" date="2011" name="J. Bacteriol.">
        <title>Complete genome sequence of the plant growth-promoting endophyte Burkholderia phytofirmans strain PsJN.</title>
        <authorList>
            <person name="Weilharter A."/>
            <person name="Mitter B."/>
            <person name="Shin M.V."/>
            <person name="Chain P.S."/>
            <person name="Nowak J."/>
            <person name="Sessitsch A."/>
        </authorList>
    </citation>
    <scope>NUCLEOTIDE SEQUENCE [LARGE SCALE GENOMIC DNA]</scope>
    <source>
        <strain>DSM 17436 / LMG 22146 / PsJN</strain>
    </source>
</reference>
<feature type="chain" id="PRO_1000125910" description="Small ribosomal subunit protein uS7">
    <location>
        <begin position="1"/>
        <end position="156"/>
    </location>
</feature>
<dbReference type="EMBL" id="CP001052">
    <property type="protein sequence ID" value="ACD18038.1"/>
    <property type="molecule type" value="Genomic_DNA"/>
</dbReference>
<dbReference type="RefSeq" id="WP_006053291.1">
    <property type="nucleotide sequence ID" value="NC_010681.1"/>
</dbReference>
<dbReference type="SMR" id="B2T755"/>
<dbReference type="STRING" id="398527.Bphyt_3648"/>
<dbReference type="GeneID" id="97311162"/>
<dbReference type="KEGG" id="bpy:Bphyt_3648"/>
<dbReference type="eggNOG" id="COG0049">
    <property type="taxonomic scope" value="Bacteria"/>
</dbReference>
<dbReference type="HOGENOM" id="CLU_072226_1_1_4"/>
<dbReference type="OrthoDB" id="9807653at2"/>
<dbReference type="Proteomes" id="UP000001739">
    <property type="component" value="Chromosome 1"/>
</dbReference>
<dbReference type="GO" id="GO:0015935">
    <property type="term" value="C:small ribosomal subunit"/>
    <property type="evidence" value="ECO:0007669"/>
    <property type="project" value="InterPro"/>
</dbReference>
<dbReference type="GO" id="GO:0019843">
    <property type="term" value="F:rRNA binding"/>
    <property type="evidence" value="ECO:0007669"/>
    <property type="project" value="UniProtKB-UniRule"/>
</dbReference>
<dbReference type="GO" id="GO:0003735">
    <property type="term" value="F:structural constituent of ribosome"/>
    <property type="evidence" value="ECO:0007669"/>
    <property type="project" value="InterPro"/>
</dbReference>
<dbReference type="GO" id="GO:0000049">
    <property type="term" value="F:tRNA binding"/>
    <property type="evidence" value="ECO:0007669"/>
    <property type="project" value="UniProtKB-UniRule"/>
</dbReference>
<dbReference type="GO" id="GO:0006412">
    <property type="term" value="P:translation"/>
    <property type="evidence" value="ECO:0007669"/>
    <property type="project" value="UniProtKB-UniRule"/>
</dbReference>
<dbReference type="CDD" id="cd14869">
    <property type="entry name" value="uS7_Bacteria"/>
    <property type="match status" value="1"/>
</dbReference>
<dbReference type="FunFam" id="1.10.455.10:FF:000001">
    <property type="entry name" value="30S ribosomal protein S7"/>
    <property type="match status" value="1"/>
</dbReference>
<dbReference type="Gene3D" id="1.10.455.10">
    <property type="entry name" value="Ribosomal protein S7 domain"/>
    <property type="match status" value="1"/>
</dbReference>
<dbReference type="HAMAP" id="MF_00480_B">
    <property type="entry name" value="Ribosomal_uS7_B"/>
    <property type="match status" value="1"/>
</dbReference>
<dbReference type="InterPro" id="IPR000235">
    <property type="entry name" value="Ribosomal_uS7"/>
</dbReference>
<dbReference type="InterPro" id="IPR005717">
    <property type="entry name" value="Ribosomal_uS7_bac/org-type"/>
</dbReference>
<dbReference type="InterPro" id="IPR020606">
    <property type="entry name" value="Ribosomal_uS7_CS"/>
</dbReference>
<dbReference type="InterPro" id="IPR023798">
    <property type="entry name" value="Ribosomal_uS7_dom"/>
</dbReference>
<dbReference type="InterPro" id="IPR036823">
    <property type="entry name" value="Ribosomal_uS7_dom_sf"/>
</dbReference>
<dbReference type="NCBIfam" id="TIGR01029">
    <property type="entry name" value="rpsG_bact"/>
    <property type="match status" value="1"/>
</dbReference>
<dbReference type="PANTHER" id="PTHR11205">
    <property type="entry name" value="RIBOSOMAL PROTEIN S7"/>
    <property type="match status" value="1"/>
</dbReference>
<dbReference type="Pfam" id="PF00177">
    <property type="entry name" value="Ribosomal_S7"/>
    <property type="match status" value="1"/>
</dbReference>
<dbReference type="PIRSF" id="PIRSF002122">
    <property type="entry name" value="RPS7p_RPS7a_RPS5e_RPS7o"/>
    <property type="match status" value="1"/>
</dbReference>
<dbReference type="SUPFAM" id="SSF47973">
    <property type="entry name" value="Ribosomal protein S7"/>
    <property type="match status" value="1"/>
</dbReference>
<dbReference type="PROSITE" id="PS00052">
    <property type="entry name" value="RIBOSOMAL_S7"/>
    <property type="match status" value="1"/>
</dbReference>
<proteinExistence type="inferred from homology"/>
<name>RS7_PARPJ</name>
<sequence length="156" mass="17610">MPRRREVPKREVLPDPKFGNVDVAKFMNVLMLSGKKSVAERIVYGAFEQIQTKGGKDPLEVFTVALNNVKPVVEVKSRRVGGANYQVPVEVRPSRRMALAMRWLREAAKKRSEKSMALRLAGELSEAAEGRGGAMKKRDEVHRMAEANKAFSHFRF</sequence>
<comment type="function">
    <text evidence="1">One of the primary rRNA binding proteins, it binds directly to 16S rRNA where it nucleates assembly of the head domain of the 30S subunit. Is located at the subunit interface close to the decoding center, probably blocks exit of the E-site tRNA.</text>
</comment>
<comment type="subunit">
    <text evidence="1">Part of the 30S ribosomal subunit. Contacts proteins S9 and S11.</text>
</comment>
<comment type="similarity">
    <text evidence="1">Belongs to the universal ribosomal protein uS7 family.</text>
</comment>
<gene>
    <name evidence="1" type="primary">rpsG</name>
    <name type="ordered locus">Bphyt_3648</name>
</gene>